<protein>
    <recommendedName>
        <fullName>T-cell-interacting, activating receptor on myeloid cells protein 1</fullName>
    </recommendedName>
    <alternativeName>
        <fullName>OSCAR-like transcript-2 protein</fullName>
        <shortName>OLT-2</shortName>
    </alternativeName>
</protein>
<sequence>MISRLLSLLCLRLCVGQTDIPENGSPPKPSLSAWPSTVLPTKSHVTMQCKSPTPSKYFILKKEGFALNSVKPYNLTEETADFHFTDLRQNDGGHYTCEYYSKWPHDTPSHPSNALFLLVTGYLPQPSFQAHHRGTVTAGSKVTLQCQKAGSVLGPVKFALLKVGHSTPVQTRSSTGMVSDFSLQNVTARDSGEYSCVYYQAKAPYRASGPSNLLEISVIDNHLPQDLAASTFPPQLTATSPKTPGTMTEGYTVDNLIRVGVAAAILLIVGGFLVEAWHSERLSPNKPW</sequence>
<keyword id="KW-1064">Adaptive immunity</keyword>
<keyword id="KW-1003">Cell membrane</keyword>
<keyword id="KW-1015">Disulfide bond</keyword>
<keyword id="KW-0325">Glycoprotein</keyword>
<keyword id="KW-0391">Immunity</keyword>
<keyword id="KW-0393">Immunoglobulin domain</keyword>
<keyword id="KW-0399">Innate immunity</keyword>
<keyword id="KW-0472">Membrane</keyword>
<keyword id="KW-0675">Receptor</keyword>
<keyword id="KW-1185">Reference proteome</keyword>
<keyword id="KW-0677">Repeat</keyword>
<keyword id="KW-0732">Signal</keyword>
<keyword id="KW-0812">Transmembrane</keyword>
<keyword id="KW-1133">Transmembrane helix</keyword>
<feature type="signal peptide" evidence="2">
    <location>
        <begin position="1"/>
        <end position="16"/>
    </location>
</feature>
<feature type="chain" id="PRO_0000394232" description="T-cell-interacting, activating receptor on myeloid cells protein 1">
    <location>
        <begin position="17"/>
        <end position="288"/>
    </location>
</feature>
<feature type="topological domain" description="Extracellular" evidence="2">
    <location>
        <begin position="17"/>
        <end position="258"/>
    </location>
</feature>
<feature type="transmembrane region" description="Helical" evidence="2">
    <location>
        <begin position="259"/>
        <end position="279"/>
    </location>
</feature>
<feature type="topological domain" description="Cytoplasmic" evidence="2">
    <location>
        <begin position="280"/>
        <end position="288"/>
    </location>
</feature>
<feature type="domain" description="Ig-like C2-type 1" evidence="3">
    <location>
        <begin position="27"/>
        <end position="113"/>
    </location>
</feature>
<feature type="domain" description="Ig-like C2-type 2" evidence="3">
    <location>
        <begin position="124"/>
        <end position="217"/>
    </location>
</feature>
<feature type="glycosylation site" description="N-linked (GlcNAc...) asparagine" evidence="2">
    <location>
        <position position="74"/>
    </location>
</feature>
<feature type="glycosylation site" description="N-linked (GlcNAc...) asparagine" evidence="2">
    <location>
        <position position="185"/>
    </location>
</feature>
<feature type="disulfide bond" evidence="3">
    <location>
        <begin position="49"/>
        <end position="97"/>
    </location>
</feature>
<feature type="disulfide bond" evidence="3">
    <location>
        <begin position="146"/>
        <end position="196"/>
    </location>
</feature>
<gene>
    <name type="primary">Tarm1</name>
    <name type="synonym">Gm9904</name>
</gene>
<comment type="function">
    <text evidence="4">May act as receptor. Negatively regulates TCR-mediated CD4(+) T cell proliferation and activation, possibly by binding an unknown ligand on the T cell surface. Enhances Toll-like receptor-mediated production of pro-inflammatory cytokines by macrophages and neutrophils.</text>
</comment>
<comment type="subunit">
    <text evidence="1">Interacts with Fc receptor gamma chain FCER1G.</text>
</comment>
<comment type="subcellular location">
    <subcellularLocation>
        <location evidence="4">Cell membrane</location>
        <topology evidence="5">Single-pass type I membrane protein</topology>
    </subcellularLocation>
</comment>
<comment type="tissue specificity">
    <text evidence="4">Expressed in lung, uterus, lymph nodes, spleen, thymus and bone marrow. Expressed in bone marrow CD11b(+)Gr-1(+) granulocyte precursors and mature neutrophils.</text>
</comment>
<comment type="induction">
    <text evidence="4">Up-regulated in CD11b(+)Ly6G(+) and CD11b(+)Ly6C(+) neutrophils upon S.typhimurium bacterial infection. Up-regulated in CD11b(+)Ly6C(intermediate)Ly6G(high)MHCI(-) neutrophils and CD11b(+)Ly6C(high)Ly6G(low)MHCII(+) inflammatory monocytes in response to TLR4 ligand lipopolysaccharide (LPS) stimulation. Up-regulated in cultured macrophages and dendritic cells by TLR4 ligand LPS, TLR2-TLR6 ligand MALP-2 (a bacterial lipopeptide from M.fermentans), TLR1-TLR2 ligand Pam3CSK4 (a synthetic bacterial lipopeptide), TLR3 ligand polyinosinic:polycytidylic acid (poly(I:C), a double-stranded RNA synthetic analog) and TLR7 synthetic ligand imiquimod (R-837).</text>
</comment>
<comment type="PTM">
    <text evidence="1">N-glycosylated.</text>
</comment>
<dbReference type="EMBL" id="DQ973493">
    <property type="protein sequence ID" value="ABI79461.1"/>
    <property type="molecule type" value="mRNA"/>
</dbReference>
<dbReference type="CCDS" id="CCDS39727.1"/>
<dbReference type="RefSeq" id="NP_796337.1">
    <property type="nucleotide sequence ID" value="NM_177363.4"/>
</dbReference>
<dbReference type="SMR" id="B6A8R8"/>
<dbReference type="FunCoup" id="B6A8R8">
    <property type="interactions" value="431"/>
</dbReference>
<dbReference type="STRING" id="10090.ENSMUSP00000145491"/>
<dbReference type="GlyCosmos" id="B6A8R8">
    <property type="glycosylation" value="2 sites, No reported glycans"/>
</dbReference>
<dbReference type="GlyGen" id="B6A8R8">
    <property type="glycosylation" value="3 sites"/>
</dbReference>
<dbReference type="PhosphoSitePlus" id="B6A8R8"/>
<dbReference type="PaxDb" id="10090-ENSMUSP00000069745"/>
<dbReference type="Antibodypedia" id="65161">
    <property type="antibodies" value="80 antibodies from 15 providers"/>
</dbReference>
<dbReference type="DNASU" id="245126"/>
<dbReference type="Ensembl" id="ENSMUST00000203821.3">
    <property type="protein sequence ID" value="ENSMUSP00000145491.2"/>
    <property type="gene ID" value="ENSMUSG00000053338.10"/>
</dbReference>
<dbReference type="GeneID" id="245126"/>
<dbReference type="KEGG" id="mmu:245126"/>
<dbReference type="UCSC" id="uc009euz.1">
    <property type="organism name" value="mouse"/>
</dbReference>
<dbReference type="AGR" id="MGI:2442280"/>
<dbReference type="CTD" id="441864"/>
<dbReference type="MGI" id="MGI:2442280">
    <property type="gene designation" value="Tarm1"/>
</dbReference>
<dbReference type="VEuPathDB" id="HostDB:ENSMUSG00000053338"/>
<dbReference type="eggNOG" id="ENOG502RYEX">
    <property type="taxonomic scope" value="Eukaryota"/>
</dbReference>
<dbReference type="GeneTree" id="ENSGT01100000263478"/>
<dbReference type="HOGENOM" id="CLU_021100_1_0_1"/>
<dbReference type="InParanoid" id="B6A8R8"/>
<dbReference type="PhylomeDB" id="B6A8R8"/>
<dbReference type="TreeFam" id="TF336644"/>
<dbReference type="Reactome" id="R-MMU-6798695">
    <property type="pathway name" value="Neutrophil degranulation"/>
</dbReference>
<dbReference type="BioGRID-ORCS" id="245126">
    <property type="hits" value="7 hits in 78 CRISPR screens"/>
</dbReference>
<dbReference type="ChiTaRS" id="Tarm1">
    <property type="organism name" value="mouse"/>
</dbReference>
<dbReference type="PRO" id="PR:B6A8R8"/>
<dbReference type="Proteomes" id="UP000000589">
    <property type="component" value="Chromosome 7"/>
</dbReference>
<dbReference type="RNAct" id="B6A8R8">
    <property type="molecule type" value="protein"/>
</dbReference>
<dbReference type="Bgee" id="ENSMUSG00000053338">
    <property type="expression patterns" value="Expressed in granulocyte and 25 other cell types or tissues"/>
</dbReference>
<dbReference type="ExpressionAtlas" id="B6A8R8">
    <property type="expression patterns" value="baseline and differential"/>
</dbReference>
<dbReference type="GO" id="GO:0005886">
    <property type="term" value="C:plasma membrane"/>
    <property type="evidence" value="ECO:0000314"/>
    <property type="project" value="UniProtKB"/>
</dbReference>
<dbReference type="GO" id="GO:0002250">
    <property type="term" value="P:adaptive immune response"/>
    <property type="evidence" value="ECO:0007669"/>
    <property type="project" value="UniProtKB-KW"/>
</dbReference>
<dbReference type="GO" id="GO:0045087">
    <property type="term" value="P:innate immune response"/>
    <property type="evidence" value="ECO:0007669"/>
    <property type="project" value="UniProtKB-KW"/>
</dbReference>
<dbReference type="GO" id="GO:2000562">
    <property type="term" value="P:negative regulation of CD4-positive, alpha-beta T cell proliferation"/>
    <property type="evidence" value="ECO:0000314"/>
    <property type="project" value="UniProtKB"/>
</dbReference>
<dbReference type="GO" id="GO:1900017">
    <property type="term" value="P:positive regulation of cytokine production involved in inflammatory response"/>
    <property type="evidence" value="ECO:0000314"/>
    <property type="project" value="UniProtKB"/>
</dbReference>
<dbReference type="FunFam" id="2.60.40.10:FF:000049">
    <property type="entry name" value="Leukocyte immunoglobulin-like receptor subfamily B member 1"/>
    <property type="match status" value="2"/>
</dbReference>
<dbReference type="Gene3D" id="2.60.40.10">
    <property type="entry name" value="Immunoglobulins"/>
    <property type="match status" value="2"/>
</dbReference>
<dbReference type="InterPro" id="IPR007110">
    <property type="entry name" value="Ig-like_dom"/>
</dbReference>
<dbReference type="InterPro" id="IPR036179">
    <property type="entry name" value="Ig-like_dom_sf"/>
</dbReference>
<dbReference type="InterPro" id="IPR013783">
    <property type="entry name" value="Ig-like_fold"/>
</dbReference>
<dbReference type="InterPro" id="IPR050412">
    <property type="entry name" value="Ig-like_Receptors_ImmuneReg"/>
</dbReference>
<dbReference type="InterPro" id="IPR003599">
    <property type="entry name" value="Ig_sub"/>
</dbReference>
<dbReference type="PANTHER" id="PTHR11738">
    <property type="entry name" value="MHC CLASS I NK CELL RECEPTOR"/>
    <property type="match status" value="1"/>
</dbReference>
<dbReference type="PANTHER" id="PTHR11738:SF157">
    <property type="entry name" value="T-CELL-INTERACTING, ACTIVATING RECEPTOR ON MYELOID CELLS PROTEIN 1"/>
    <property type="match status" value="1"/>
</dbReference>
<dbReference type="Pfam" id="PF13895">
    <property type="entry name" value="Ig_2"/>
    <property type="match status" value="2"/>
</dbReference>
<dbReference type="SMART" id="SM00409">
    <property type="entry name" value="IG"/>
    <property type="match status" value="2"/>
</dbReference>
<dbReference type="SUPFAM" id="SSF48726">
    <property type="entry name" value="Immunoglobulin"/>
    <property type="match status" value="2"/>
</dbReference>
<dbReference type="PROSITE" id="PS50835">
    <property type="entry name" value="IG_LIKE"/>
    <property type="match status" value="1"/>
</dbReference>
<accession>B6A8R8</accession>
<proteinExistence type="evidence at transcript level"/>
<organism>
    <name type="scientific">Mus musculus</name>
    <name type="common">Mouse</name>
    <dbReference type="NCBI Taxonomy" id="10090"/>
    <lineage>
        <taxon>Eukaryota</taxon>
        <taxon>Metazoa</taxon>
        <taxon>Chordata</taxon>
        <taxon>Craniata</taxon>
        <taxon>Vertebrata</taxon>
        <taxon>Euteleostomi</taxon>
        <taxon>Mammalia</taxon>
        <taxon>Eutheria</taxon>
        <taxon>Euarchontoglires</taxon>
        <taxon>Glires</taxon>
        <taxon>Rodentia</taxon>
        <taxon>Myomorpha</taxon>
        <taxon>Muroidea</taxon>
        <taxon>Muridae</taxon>
        <taxon>Murinae</taxon>
        <taxon>Mus</taxon>
        <taxon>Mus</taxon>
    </lineage>
</organism>
<reference key="1">
    <citation type="submission" date="2006-08" db="EMBL/GenBank/DDBJ databases">
        <title>Mus musculus OSCAR-like transcript-2 (OLT-2) mRNA.</title>
        <authorList>
            <person name="Barrow A.D."/>
            <person name="de Bono B."/>
            <person name="Trowsdale J."/>
        </authorList>
    </citation>
    <scope>NUCLEOTIDE SEQUENCE [MRNA]</scope>
    <source>
        <strain>C57BL/6J</strain>
    </source>
</reference>
<reference key="2">
    <citation type="journal article" date="2015" name="J. Immunol.">
        <title>TARM1 is a novel leukocyte receptor complex-encoded ITAM receptor that costimulates proinflammatory cytokine secretion by macrophages and neutrophils.</title>
        <authorList>
            <person name="Radjabova V."/>
            <person name="Mastroeni P."/>
            <person name="Skjoedt K."/>
            <person name="Zaccone P."/>
            <person name="de Bono B."/>
            <person name="Goodall J.C."/>
            <person name="Chilvers E.R."/>
            <person name="Juss J.K."/>
            <person name="Jones D.C."/>
            <person name="Trowsdale J."/>
            <person name="Barrow A.D."/>
        </authorList>
    </citation>
    <scope>FUNCTION</scope>
    <scope>SUBCELLULAR LOCATION</scope>
    <scope>TISSUE SPECIFICITY</scope>
    <scope>INDUCTION</scope>
</reference>
<evidence type="ECO:0000250" key="1">
    <source>
        <dbReference type="UniProtKB" id="B6A8C7"/>
    </source>
</evidence>
<evidence type="ECO:0000255" key="2"/>
<evidence type="ECO:0000255" key="3">
    <source>
        <dbReference type="PROSITE-ProRule" id="PRU00114"/>
    </source>
</evidence>
<evidence type="ECO:0000269" key="4">
    <source>
    </source>
</evidence>
<evidence type="ECO:0000305" key="5"/>
<name>TARM1_MOUSE</name>